<dbReference type="EC" id="5.3.3.2" evidence="1"/>
<dbReference type="EMBL" id="CP000053">
    <property type="protein sequence ID" value="AAY61636.1"/>
    <property type="molecule type" value="Genomic_DNA"/>
</dbReference>
<dbReference type="SMR" id="Q4ULD7"/>
<dbReference type="STRING" id="315456.RF_0785"/>
<dbReference type="KEGG" id="rfe:RF_0785"/>
<dbReference type="eggNOG" id="COG1304">
    <property type="taxonomic scope" value="Bacteria"/>
</dbReference>
<dbReference type="HOGENOM" id="CLU_065515_1_0_5"/>
<dbReference type="Proteomes" id="UP000008548">
    <property type="component" value="Chromosome"/>
</dbReference>
<dbReference type="GO" id="GO:0005737">
    <property type="term" value="C:cytoplasm"/>
    <property type="evidence" value="ECO:0007669"/>
    <property type="project" value="UniProtKB-SubCell"/>
</dbReference>
<dbReference type="GO" id="GO:0010181">
    <property type="term" value="F:FMN binding"/>
    <property type="evidence" value="ECO:0007669"/>
    <property type="project" value="UniProtKB-UniRule"/>
</dbReference>
<dbReference type="GO" id="GO:0004452">
    <property type="term" value="F:isopentenyl-diphosphate delta-isomerase activity"/>
    <property type="evidence" value="ECO:0007669"/>
    <property type="project" value="UniProtKB-UniRule"/>
</dbReference>
<dbReference type="GO" id="GO:0000287">
    <property type="term" value="F:magnesium ion binding"/>
    <property type="evidence" value="ECO:0007669"/>
    <property type="project" value="UniProtKB-UniRule"/>
</dbReference>
<dbReference type="GO" id="GO:0070402">
    <property type="term" value="F:NADPH binding"/>
    <property type="evidence" value="ECO:0007669"/>
    <property type="project" value="UniProtKB-UniRule"/>
</dbReference>
<dbReference type="GO" id="GO:0016491">
    <property type="term" value="F:oxidoreductase activity"/>
    <property type="evidence" value="ECO:0007669"/>
    <property type="project" value="InterPro"/>
</dbReference>
<dbReference type="GO" id="GO:0008299">
    <property type="term" value="P:isoprenoid biosynthetic process"/>
    <property type="evidence" value="ECO:0007669"/>
    <property type="project" value="UniProtKB-UniRule"/>
</dbReference>
<dbReference type="CDD" id="cd02811">
    <property type="entry name" value="IDI-2_FMN"/>
    <property type="match status" value="1"/>
</dbReference>
<dbReference type="Gene3D" id="3.20.20.70">
    <property type="entry name" value="Aldolase class I"/>
    <property type="match status" value="1"/>
</dbReference>
<dbReference type="HAMAP" id="MF_00354">
    <property type="entry name" value="Idi_2"/>
    <property type="match status" value="1"/>
</dbReference>
<dbReference type="InterPro" id="IPR013785">
    <property type="entry name" value="Aldolase_TIM"/>
</dbReference>
<dbReference type="InterPro" id="IPR000262">
    <property type="entry name" value="FMN-dep_DH"/>
</dbReference>
<dbReference type="InterPro" id="IPR011179">
    <property type="entry name" value="IPdP_isomerase"/>
</dbReference>
<dbReference type="NCBIfam" id="TIGR02151">
    <property type="entry name" value="IPP_isom_2"/>
    <property type="match status" value="1"/>
</dbReference>
<dbReference type="PANTHER" id="PTHR43665">
    <property type="entry name" value="ISOPENTENYL-DIPHOSPHATE DELTA-ISOMERASE"/>
    <property type="match status" value="1"/>
</dbReference>
<dbReference type="PANTHER" id="PTHR43665:SF1">
    <property type="entry name" value="ISOPENTENYL-DIPHOSPHATE DELTA-ISOMERASE"/>
    <property type="match status" value="1"/>
</dbReference>
<dbReference type="Pfam" id="PF01070">
    <property type="entry name" value="FMN_dh"/>
    <property type="match status" value="2"/>
</dbReference>
<dbReference type="PIRSF" id="PIRSF003314">
    <property type="entry name" value="IPP_isomerase"/>
    <property type="match status" value="1"/>
</dbReference>
<dbReference type="SUPFAM" id="SSF51395">
    <property type="entry name" value="FMN-linked oxidoreductases"/>
    <property type="match status" value="1"/>
</dbReference>
<sequence>MSKMPKNQNLDIERKQDHIEINLMKNVASTLTSGFESMQFIHNALPEINYDSIDTTSTFLGKSLQAPILISSMTGGTTRAGDINYRLAQAAQKAGIAMGLGSMRVLLTKPDTITTFAVRDVAPDIPLLANIGAVQLNYFVTPKECQYLVDVVKADALILHLNVLQELTQPEGNRNWENLLPKIKELVNYLSVPVIVKEVGYGLSKKVAESLIGVGVKVLDIAGSGGTSWSQVEAYRATNSLQNRIASSFINWGIPTLDSLKMVREVSGDIPIIASGGLKSGIDGAKAIRMGANIFGLAGQFLKAADTSESLLSEEVQLIIEQLKITMLCTGSRTLKDLAKAEIRL</sequence>
<gene>
    <name evidence="1" type="primary">fni</name>
    <name type="ordered locus">RF_0785</name>
</gene>
<keyword id="KW-0963">Cytoplasm</keyword>
<keyword id="KW-0285">Flavoprotein</keyword>
<keyword id="KW-0288">FMN</keyword>
<keyword id="KW-0413">Isomerase</keyword>
<keyword id="KW-0414">Isoprene biosynthesis</keyword>
<keyword id="KW-0460">Magnesium</keyword>
<keyword id="KW-0479">Metal-binding</keyword>
<keyword id="KW-0521">NADP</keyword>
<proteinExistence type="inferred from homology"/>
<evidence type="ECO:0000255" key="1">
    <source>
        <dbReference type="HAMAP-Rule" id="MF_00354"/>
    </source>
</evidence>
<name>IDI2_RICFE</name>
<feature type="chain" id="PRO_0000229508" description="Isopentenyl-diphosphate delta-isomerase">
    <location>
        <begin position="1"/>
        <end position="345"/>
    </location>
</feature>
<feature type="binding site" evidence="1">
    <location>
        <begin position="14"/>
        <end position="15"/>
    </location>
    <ligand>
        <name>substrate</name>
    </ligand>
</feature>
<feature type="binding site" evidence="1">
    <location>
        <position position="71"/>
    </location>
    <ligand>
        <name>FMN</name>
        <dbReference type="ChEBI" id="CHEBI:58210"/>
    </ligand>
</feature>
<feature type="binding site" evidence="1">
    <location>
        <begin position="72"/>
        <end position="74"/>
    </location>
    <ligand>
        <name>FMN</name>
        <dbReference type="ChEBI" id="CHEBI:58210"/>
    </ligand>
</feature>
<feature type="binding site" evidence="1">
    <location>
        <begin position="102"/>
        <end position="104"/>
    </location>
    <ligand>
        <name>substrate</name>
    </ligand>
</feature>
<feature type="binding site" evidence="1">
    <location>
        <position position="102"/>
    </location>
    <ligand>
        <name>FMN</name>
        <dbReference type="ChEBI" id="CHEBI:58210"/>
    </ligand>
</feature>
<feature type="binding site" evidence="1">
    <location>
        <position position="130"/>
    </location>
    <ligand>
        <name>FMN</name>
        <dbReference type="ChEBI" id="CHEBI:58210"/>
    </ligand>
</feature>
<feature type="binding site" evidence="1">
    <location>
        <position position="165"/>
    </location>
    <ligand>
        <name>substrate</name>
    </ligand>
</feature>
<feature type="binding site" evidence="1">
    <location>
        <position position="166"/>
    </location>
    <ligand>
        <name>Mg(2+)</name>
        <dbReference type="ChEBI" id="CHEBI:18420"/>
    </ligand>
</feature>
<feature type="binding site" evidence="1">
    <location>
        <position position="197"/>
    </location>
    <ligand>
        <name>FMN</name>
        <dbReference type="ChEBI" id="CHEBI:58210"/>
    </ligand>
</feature>
<feature type="binding site" evidence="1">
    <location>
        <position position="227"/>
    </location>
    <ligand>
        <name>FMN</name>
        <dbReference type="ChEBI" id="CHEBI:58210"/>
    </ligand>
</feature>
<feature type="binding site" evidence="1">
    <location>
        <begin position="277"/>
        <end position="279"/>
    </location>
    <ligand>
        <name>FMN</name>
        <dbReference type="ChEBI" id="CHEBI:58210"/>
    </ligand>
</feature>
<feature type="binding site" evidence="1">
    <location>
        <begin position="298"/>
        <end position="299"/>
    </location>
    <ligand>
        <name>FMN</name>
        <dbReference type="ChEBI" id="CHEBI:58210"/>
    </ligand>
</feature>
<protein>
    <recommendedName>
        <fullName evidence="1">Isopentenyl-diphosphate delta-isomerase</fullName>
        <shortName evidence="1">IPP isomerase</shortName>
        <ecNumber evidence="1">5.3.3.2</ecNumber>
    </recommendedName>
    <alternativeName>
        <fullName evidence="1">Isopentenyl diphosphate:dimethylallyl diphosphate isomerase</fullName>
    </alternativeName>
    <alternativeName>
        <fullName evidence="1">Isopentenyl pyrophosphate isomerase</fullName>
    </alternativeName>
    <alternativeName>
        <fullName evidence="1">Type 2 isopentenyl diphosphate isomerase</fullName>
        <shortName evidence="1">IDI-2</shortName>
    </alternativeName>
</protein>
<reference key="1">
    <citation type="journal article" date="2005" name="PLoS Biol.">
        <title>The genome sequence of Rickettsia felis identifies the first putative conjugative plasmid in an obligate intracellular parasite.</title>
        <authorList>
            <person name="Ogata H."/>
            <person name="Renesto P."/>
            <person name="Audic S."/>
            <person name="Robert C."/>
            <person name="Blanc G."/>
            <person name="Fournier P.-E."/>
            <person name="Parinello H."/>
            <person name="Claverie J.-M."/>
            <person name="Raoult D."/>
        </authorList>
    </citation>
    <scope>NUCLEOTIDE SEQUENCE [LARGE SCALE GENOMIC DNA]</scope>
    <source>
        <strain>ATCC VR-1525 / URRWXCal2</strain>
    </source>
</reference>
<accession>Q4ULD7</accession>
<comment type="function">
    <text evidence="1">Involved in the biosynthesis of isoprenoids. Catalyzes the 1,3-allylic rearrangement of the homoallylic substrate isopentenyl (IPP) to its allylic isomer, dimethylallyl diphosphate (DMAPP).</text>
</comment>
<comment type="catalytic activity">
    <reaction evidence="1">
        <text>isopentenyl diphosphate = dimethylallyl diphosphate</text>
        <dbReference type="Rhea" id="RHEA:23284"/>
        <dbReference type="ChEBI" id="CHEBI:57623"/>
        <dbReference type="ChEBI" id="CHEBI:128769"/>
        <dbReference type="EC" id="5.3.3.2"/>
    </reaction>
</comment>
<comment type="cofactor">
    <cofactor evidence="1">
        <name>FMN</name>
        <dbReference type="ChEBI" id="CHEBI:58210"/>
    </cofactor>
</comment>
<comment type="cofactor">
    <cofactor evidence="1">
        <name>NADPH</name>
        <dbReference type="ChEBI" id="CHEBI:57783"/>
    </cofactor>
</comment>
<comment type="cofactor">
    <cofactor evidence="1">
        <name>Mg(2+)</name>
        <dbReference type="ChEBI" id="CHEBI:18420"/>
    </cofactor>
</comment>
<comment type="subunit">
    <text evidence="1">Homooctamer. Dimer of tetramers.</text>
</comment>
<comment type="subcellular location">
    <subcellularLocation>
        <location evidence="1">Cytoplasm</location>
    </subcellularLocation>
</comment>
<comment type="similarity">
    <text evidence="1">Belongs to the IPP isomerase type 2 family.</text>
</comment>
<organism>
    <name type="scientific">Rickettsia felis (strain ATCC VR-1525 / URRWXCal2)</name>
    <name type="common">Rickettsia azadi</name>
    <dbReference type="NCBI Taxonomy" id="315456"/>
    <lineage>
        <taxon>Bacteria</taxon>
        <taxon>Pseudomonadati</taxon>
        <taxon>Pseudomonadota</taxon>
        <taxon>Alphaproteobacteria</taxon>
        <taxon>Rickettsiales</taxon>
        <taxon>Rickettsiaceae</taxon>
        <taxon>Rickettsieae</taxon>
        <taxon>Rickettsia</taxon>
        <taxon>spotted fever group</taxon>
    </lineage>
</organism>